<dbReference type="EMBL" id="AF336304">
    <property type="protein sequence ID" value="AAK52471.1"/>
    <property type="molecule type" value="mRNA"/>
</dbReference>
<dbReference type="EMBL" id="AF151534">
    <property type="protein sequence ID" value="AAF72101.1"/>
    <property type="molecule type" value="mRNA"/>
</dbReference>
<dbReference type="EMBL" id="AK022776">
    <property type="protein sequence ID" value="BAB14239.1"/>
    <property type="molecule type" value="mRNA"/>
</dbReference>
<dbReference type="EMBL" id="AL731540">
    <property type="status" value="NOT_ANNOTATED_CDS"/>
    <property type="molecule type" value="Genomic_DNA"/>
</dbReference>
<dbReference type="EMBL" id="BC016172">
    <property type="protein sequence ID" value="AAH16172.1"/>
    <property type="molecule type" value="mRNA"/>
</dbReference>
<dbReference type="CCDS" id="CCDS7296.1"/>
<dbReference type="RefSeq" id="NP_061119.1">
    <property type="nucleotide sequence ID" value="NM_018649.3"/>
</dbReference>
<dbReference type="PDB" id="2XD7">
    <property type="method" value="X-ray"/>
    <property type="resolution" value="2.09 A"/>
    <property type="chains" value="A/B/C/D=177-369"/>
</dbReference>
<dbReference type="PDB" id="6FY5">
    <property type="method" value="X-ray"/>
    <property type="resolution" value="1.65 A"/>
    <property type="chains" value="A/B=178-372"/>
</dbReference>
<dbReference type="PDBsum" id="2XD7"/>
<dbReference type="PDBsum" id="6FY5"/>
<dbReference type="SMR" id="Q9P0M6"/>
<dbReference type="BioGRID" id="120686">
    <property type="interactions" value="231"/>
</dbReference>
<dbReference type="DIP" id="DIP-48563N"/>
<dbReference type="FunCoup" id="Q9P0M6">
    <property type="interactions" value="819"/>
</dbReference>
<dbReference type="IntAct" id="Q9P0M6">
    <property type="interactions" value="145"/>
</dbReference>
<dbReference type="MINT" id="Q9P0M6"/>
<dbReference type="STRING" id="9606.ENSP00000362352"/>
<dbReference type="GlyGen" id="Q9P0M6">
    <property type="glycosylation" value="1 site, 1 O-linked glycan (1 site)"/>
</dbReference>
<dbReference type="iPTMnet" id="Q9P0M6"/>
<dbReference type="PhosphoSitePlus" id="Q9P0M6"/>
<dbReference type="SwissPalm" id="Q9P0M6"/>
<dbReference type="BioMuta" id="H2AFY2"/>
<dbReference type="DMDM" id="12585260"/>
<dbReference type="jPOST" id="Q9P0M6"/>
<dbReference type="MassIVE" id="Q9P0M6"/>
<dbReference type="PaxDb" id="9606-ENSP00000362352"/>
<dbReference type="PeptideAtlas" id="Q9P0M6"/>
<dbReference type="ProteomicsDB" id="83580"/>
<dbReference type="Pumba" id="Q9P0M6"/>
<dbReference type="Antibodypedia" id="28963">
    <property type="antibodies" value="356 antibodies from 23 providers"/>
</dbReference>
<dbReference type="DNASU" id="55506"/>
<dbReference type="Ensembl" id="ENST00000373255.9">
    <property type="protein sequence ID" value="ENSP00000362352.3"/>
    <property type="gene ID" value="ENSG00000099284.15"/>
</dbReference>
<dbReference type="Ensembl" id="ENST00000679349.1">
    <property type="protein sequence ID" value="ENSP00000503835.1"/>
    <property type="gene ID" value="ENSG00000099284.15"/>
</dbReference>
<dbReference type="GeneID" id="55506"/>
<dbReference type="KEGG" id="hsa:55506"/>
<dbReference type="MANE-Select" id="ENST00000373255.9">
    <property type="protein sequence ID" value="ENSP00000362352.3"/>
    <property type="RefSeq nucleotide sequence ID" value="NM_018649.3"/>
    <property type="RefSeq protein sequence ID" value="NP_061119.1"/>
</dbReference>
<dbReference type="UCSC" id="uc001jqm.4">
    <property type="organism name" value="human"/>
</dbReference>
<dbReference type="AGR" id="HGNC:14453"/>
<dbReference type="CTD" id="55506"/>
<dbReference type="DisGeNET" id="55506"/>
<dbReference type="GeneCards" id="MACROH2A2"/>
<dbReference type="HGNC" id="HGNC:14453">
    <property type="gene designation" value="MACROH2A2"/>
</dbReference>
<dbReference type="HPA" id="ENSG00000099284">
    <property type="expression patterns" value="Low tissue specificity"/>
</dbReference>
<dbReference type="MIM" id="616141">
    <property type="type" value="gene"/>
</dbReference>
<dbReference type="neXtProt" id="NX_Q9P0M6"/>
<dbReference type="OpenTargets" id="ENSG00000099284"/>
<dbReference type="VEuPathDB" id="HostDB:ENSG00000099284"/>
<dbReference type="eggNOG" id="KOG1756">
    <property type="taxonomic scope" value="Eukaryota"/>
</dbReference>
<dbReference type="eggNOG" id="KOG2633">
    <property type="taxonomic scope" value="Eukaryota"/>
</dbReference>
<dbReference type="GeneTree" id="ENSGT00940000158120"/>
<dbReference type="InParanoid" id="Q9P0M6"/>
<dbReference type="OMA" id="LVLGQKX"/>
<dbReference type="OrthoDB" id="9421954at2759"/>
<dbReference type="PAN-GO" id="Q9P0M6">
    <property type="GO annotations" value="1 GO annotation based on evolutionary models"/>
</dbReference>
<dbReference type="PhylomeDB" id="Q9P0M6"/>
<dbReference type="TreeFam" id="TF332276"/>
<dbReference type="PathwayCommons" id="Q9P0M6"/>
<dbReference type="SignaLink" id="Q9P0M6"/>
<dbReference type="BioGRID-ORCS" id="55506">
    <property type="hits" value="12 hits in 1155 CRISPR screens"/>
</dbReference>
<dbReference type="ChiTaRS" id="H2AFY2">
    <property type="organism name" value="human"/>
</dbReference>
<dbReference type="EvolutionaryTrace" id="Q9P0M6"/>
<dbReference type="GeneWiki" id="H2AFY2"/>
<dbReference type="GenomeRNAi" id="55506"/>
<dbReference type="Pharos" id="Q9P0M6">
    <property type="development level" value="Tbio"/>
</dbReference>
<dbReference type="PRO" id="PR:Q9P0M6"/>
<dbReference type="Proteomes" id="UP000005640">
    <property type="component" value="Chromosome 10"/>
</dbReference>
<dbReference type="RNAct" id="Q9P0M6">
    <property type="molecule type" value="protein"/>
</dbReference>
<dbReference type="Bgee" id="ENSG00000099284">
    <property type="expression patterns" value="Expressed in cortical plate and 197 other cell types or tissues"/>
</dbReference>
<dbReference type="ExpressionAtlas" id="Q9P0M6">
    <property type="expression patterns" value="baseline and differential"/>
</dbReference>
<dbReference type="GO" id="GO:0001740">
    <property type="term" value="C:Barr body"/>
    <property type="evidence" value="ECO:0000314"/>
    <property type="project" value="MGI"/>
</dbReference>
<dbReference type="GO" id="GO:0000785">
    <property type="term" value="C:chromatin"/>
    <property type="evidence" value="ECO:0000314"/>
    <property type="project" value="UniProtKB"/>
</dbReference>
<dbReference type="GO" id="GO:0000781">
    <property type="term" value="C:chromosome, telomeric region"/>
    <property type="evidence" value="ECO:0007005"/>
    <property type="project" value="BHF-UCL"/>
</dbReference>
<dbReference type="GO" id="GO:0070062">
    <property type="term" value="C:extracellular exosome"/>
    <property type="evidence" value="ECO:0007005"/>
    <property type="project" value="UniProtKB"/>
</dbReference>
<dbReference type="GO" id="GO:0005654">
    <property type="term" value="C:nucleoplasm"/>
    <property type="evidence" value="ECO:0000314"/>
    <property type="project" value="HPA"/>
</dbReference>
<dbReference type="GO" id="GO:0000786">
    <property type="term" value="C:nucleosome"/>
    <property type="evidence" value="ECO:0000318"/>
    <property type="project" value="GO_Central"/>
</dbReference>
<dbReference type="GO" id="GO:0005634">
    <property type="term" value="C:nucleus"/>
    <property type="evidence" value="ECO:0000318"/>
    <property type="project" value="GO_Central"/>
</dbReference>
<dbReference type="GO" id="GO:0031490">
    <property type="term" value="F:chromatin DNA binding"/>
    <property type="evidence" value="ECO:0000314"/>
    <property type="project" value="UniProtKB"/>
</dbReference>
<dbReference type="GO" id="GO:0046982">
    <property type="term" value="F:protein heterodimerization activity"/>
    <property type="evidence" value="ECO:0007669"/>
    <property type="project" value="InterPro"/>
</dbReference>
<dbReference type="GO" id="GO:0000977">
    <property type="term" value="F:RNA polymerase II transcription regulatory region sequence-specific DNA binding"/>
    <property type="evidence" value="ECO:0000314"/>
    <property type="project" value="UniProtKB"/>
</dbReference>
<dbReference type="GO" id="GO:0030527">
    <property type="term" value="F:structural constituent of chromatin"/>
    <property type="evidence" value="ECO:0000318"/>
    <property type="project" value="GO_Central"/>
</dbReference>
<dbReference type="GO" id="GO:0000976">
    <property type="term" value="F:transcription cis-regulatory region binding"/>
    <property type="evidence" value="ECO:0000314"/>
    <property type="project" value="UniProtKB"/>
</dbReference>
<dbReference type="GO" id="GO:0007420">
    <property type="term" value="P:brain development"/>
    <property type="evidence" value="ECO:0000315"/>
    <property type="project" value="UniProtKB"/>
</dbReference>
<dbReference type="GO" id="GO:0071169">
    <property type="term" value="P:establishment of protein localization to chromatin"/>
    <property type="evidence" value="ECO:0000315"/>
    <property type="project" value="UniProtKB"/>
</dbReference>
<dbReference type="GO" id="GO:0031507">
    <property type="term" value="P:heterochromatin formation"/>
    <property type="evidence" value="ECO:0000318"/>
    <property type="project" value="GO_Central"/>
</dbReference>
<dbReference type="GO" id="GO:0045814">
    <property type="term" value="P:negative regulation of gene expression, epigenetic"/>
    <property type="evidence" value="ECO:0000315"/>
    <property type="project" value="UniProtKB"/>
</dbReference>
<dbReference type="GO" id="GO:0000122">
    <property type="term" value="P:negative regulation of transcription by RNA polymerase II"/>
    <property type="evidence" value="ECO:0000315"/>
    <property type="project" value="UniProtKB"/>
</dbReference>
<dbReference type="GO" id="GO:1901837">
    <property type="term" value="P:negative regulation of transcription of nucleolar large rRNA by RNA polymerase I"/>
    <property type="evidence" value="ECO:0000316"/>
    <property type="project" value="UniProtKB"/>
</dbReference>
<dbReference type="GO" id="GO:0006334">
    <property type="term" value="P:nucleosome assembly"/>
    <property type="evidence" value="ECO:0007669"/>
    <property type="project" value="InterPro"/>
</dbReference>
<dbReference type="GO" id="GO:0045618">
    <property type="term" value="P:positive regulation of keratinocyte differentiation"/>
    <property type="evidence" value="ECO:0000315"/>
    <property type="project" value="UniProtKB"/>
</dbReference>
<dbReference type="GO" id="GO:0007549">
    <property type="term" value="P:sex-chromosome dosage compensation"/>
    <property type="evidence" value="ECO:0000314"/>
    <property type="project" value="MGI"/>
</dbReference>
<dbReference type="CDD" id="cd00074">
    <property type="entry name" value="HFD_H2A"/>
    <property type="match status" value="1"/>
</dbReference>
<dbReference type="CDD" id="cd02904">
    <property type="entry name" value="Macro_H2A-like"/>
    <property type="match status" value="1"/>
</dbReference>
<dbReference type="FunFam" id="1.10.20.10:FF:000013">
    <property type="entry name" value="Core histone macro-H2A"/>
    <property type="match status" value="1"/>
</dbReference>
<dbReference type="FunFam" id="3.40.220.10:FF:000002">
    <property type="entry name" value="Core histone macro-H2A"/>
    <property type="match status" value="1"/>
</dbReference>
<dbReference type="Gene3D" id="1.10.20.10">
    <property type="entry name" value="Histone, subunit A"/>
    <property type="match status" value="1"/>
</dbReference>
<dbReference type="Gene3D" id="3.40.220.10">
    <property type="entry name" value="Leucine Aminopeptidase, subunit E, domain 1"/>
    <property type="match status" value="1"/>
</dbReference>
<dbReference type="InterPro" id="IPR021171">
    <property type="entry name" value="Core_histone_macro-H2A"/>
</dbReference>
<dbReference type="InterPro" id="IPR009072">
    <property type="entry name" value="Histone-fold"/>
</dbReference>
<dbReference type="InterPro" id="IPR002119">
    <property type="entry name" value="Histone_H2A"/>
</dbReference>
<dbReference type="InterPro" id="IPR007125">
    <property type="entry name" value="Histone_H2A/H2B/H3"/>
</dbReference>
<dbReference type="InterPro" id="IPR032454">
    <property type="entry name" value="Histone_H2A_C"/>
</dbReference>
<dbReference type="InterPro" id="IPR002589">
    <property type="entry name" value="Macro_dom"/>
</dbReference>
<dbReference type="InterPro" id="IPR043472">
    <property type="entry name" value="Macro_dom-like"/>
</dbReference>
<dbReference type="InterPro" id="IPR035796">
    <property type="entry name" value="Macro_H2A"/>
</dbReference>
<dbReference type="PANTHER" id="PTHR23430">
    <property type="entry name" value="HISTONE H2A"/>
    <property type="match status" value="1"/>
</dbReference>
<dbReference type="Pfam" id="PF00125">
    <property type="entry name" value="Histone"/>
    <property type="match status" value="1"/>
</dbReference>
<dbReference type="Pfam" id="PF16211">
    <property type="entry name" value="Histone_H2A_C"/>
    <property type="match status" value="1"/>
</dbReference>
<dbReference type="Pfam" id="PF01661">
    <property type="entry name" value="Macro"/>
    <property type="match status" value="1"/>
</dbReference>
<dbReference type="PIRSF" id="PIRSF037942">
    <property type="entry name" value="Core_histone_macro-H2A"/>
    <property type="match status" value="1"/>
</dbReference>
<dbReference type="PRINTS" id="PR00620">
    <property type="entry name" value="HISTONEH2A"/>
</dbReference>
<dbReference type="SMART" id="SM00506">
    <property type="entry name" value="A1pp"/>
    <property type="match status" value="1"/>
</dbReference>
<dbReference type="SMART" id="SM00414">
    <property type="entry name" value="H2A"/>
    <property type="match status" value="1"/>
</dbReference>
<dbReference type="SUPFAM" id="SSF47113">
    <property type="entry name" value="Histone-fold"/>
    <property type="match status" value="1"/>
</dbReference>
<dbReference type="SUPFAM" id="SSF52949">
    <property type="entry name" value="Macro domain-like"/>
    <property type="match status" value="1"/>
</dbReference>
<dbReference type="PROSITE" id="PS51154">
    <property type="entry name" value="MACRO"/>
    <property type="match status" value="1"/>
</dbReference>
<accession>Q9P0M6</accession>
<accession>Q5SQT2</accession>
<gene>
    <name evidence="8" type="primary">MACROH2A2</name>
    <name evidence="8" type="synonym">H2AFY2</name>
</gene>
<keyword id="KW-0002">3D-structure</keyword>
<keyword id="KW-0156">Chromatin regulator</keyword>
<keyword id="KW-0158">Chromosome</keyword>
<keyword id="KW-0238">DNA-binding</keyword>
<keyword id="KW-1017">Isopeptide bond</keyword>
<keyword id="KW-0544">Nucleosome core</keyword>
<keyword id="KW-0539">Nucleus</keyword>
<keyword id="KW-1267">Proteomics identification</keyword>
<keyword id="KW-1185">Reference proteome</keyword>
<keyword id="KW-0832">Ubl conjugation</keyword>
<protein>
    <recommendedName>
        <fullName>Core histone macro-H2A.2</fullName>
        <shortName>Histone macroH2A2</shortName>
        <shortName>mH2A2</shortName>
    </recommendedName>
</protein>
<reference key="1">
    <citation type="journal article" date="2001" name="Hum. Mol. Genet.">
        <title>Histone H2A variants and the inactive X chromosome: identification of a second macroH2A variant.</title>
        <authorList>
            <person name="Chadwick B.P."/>
            <person name="Willard H.F."/>
        </authorList>
    </citation>
    <scope>NUCLEOTIDE SEQUENCE [MRNA]</scope>
    <scope>SUBCELLULAR LOCATION</scope>
</reference>
<reference key="2">
    <citation type="journal article" date="2001" name="J. Biol. Chem.">
        <title>MACROH2A2, a new member of the MACROH2A core histone family.</title>
        <authorList>
            <person name="Costanzi C."/>
            <person name="Pehrson J.R."/>
        </authorList>
    </citation>
    <scope>NUCLEOTIDE SEQUENCE [MRNA]</scope>
    <scope>SUBCELLULAR LOCATION</scope>
</reference>
<reference key="3">
    <citation type="journal article" date="2004" name="Nat. Genet.">
        <title>Complete sequencing and characterization of 21,243 full-length human cDNAs.</title>
        <authorList>
            <person name="Ota T."/>
            <person name="Suzuki Y."/>
            <person name="Nishikawa T."/>
            <person name="Otsuki T."/>
            <person name="Sugiyama T."/>
            <person name="Irie R."/>
            <person name="Wakamatsu A."/>
            <person name="Hayashi K."/>
            <person name="Sato H."/>
            <person name="Nagai K."/>
            <person name="Kimura K."/>
            <person name="Makita H."/>
            <person name="Sekine M."/>
            <person name="Obayashi M."/>
            <person name="Nishi T."/>
            <person name="Shibahara T."/>
            <person name="Tanaka T."/>
            <person name="Ishii S."/>
            <person name="Yamamoto J."/>
            <person name="Saito K."/>
            <person name="Kawai Y."/>
            <person name="Isono Y."/>
            <person name="Nakamura Y."/>
            <person name="Nagahari K."/>
            <person name="Murakami K."/>
            <person name="Yasuda T."/>
            <person name="Iwayanagi T."/>
            <person name="Wagatsuma M."/>
            <person name="Shiratori A."/>
            <person name="Sudo H."/>
            <person name="Hosoiri T."/>
            <person name="Kaku Y."/>
            <person name="Kodaira H."/>
            <person name="Kondo H."/>
            <person name="Sugawara M."/>
            <person name="Takahashi M."/>
            <person name="Kanda K."/>
            <person name="Yokoi T."/>
            <person name="Furuya T."/>
            <person name="Kikkawa E."/>
            <person name="Omura Y."/>
            <person name="Abe K."/>
            <person name="Kamihara K."/>
            <person name="Katsuta N."/>
            <person name="Sato K."/>
            <person name="Tanikawa M."/>
            <person name="Yamazaki M."/>
            <person name="Ninomiya K."/>
            <person name="Ishibashi T."/>
            <person name="Yamashita H."/>
            <person name="Murakawa K."/>
            <person name="Fujimori K."/>
            <person name="Tanai H."/>
            <person name="Kimata M."/>
            <person name="Watanabe M."/>
            <person name="Hiraoka S."/>
            <person name="Chiba Y."/>
            <person name="Ishida S."/>
            <person name="Ono Y."/>
            <person name="Takiguchi S."/>
            <person name="Watanabe S."/>
            <person name="Yosida M."/>
            <person name="Hotuta T."/>
            <person name="Kusano J."/>
            <person name="Kanehori K."/>
            <person name="Takahashi-Fujii A."/>
            <person name="Hara H."/>
            <person name="Tanase T.-O."/>
            <person name="Nomura Y."/>
            <person name="Togiya S."/>
            <person name="Komai F."/>
            <person name="Hara R."/>
            <person name="Takeuchi K."/>
            <person name="Arita M."/>
            <person name="Imose N."/>
            <person name="Musashino K."/>
            <person name="Yuuki H."/>
            <person name="Oshima A."/>
            <person name="Sasaki N."/>
            <person name="Aotsuka S."/>
            <person name="Yoshikawa Y."/>
            <person name="Matsunawa H."/>
            <person name="Ichihara T."/>
            <person name="Shiohata N."/>
            <person name="Sano S."/>
            <person name="Moriya S."/>
            <person name="Momiyama H."/>
            <person name="Satoh N."/>
            <person name="Takami S."/>
            <person name="Terashima Y."/>
            <person name="Suzuki O."/>
            <person name="Nakagawa S."/>
            <person name="Senoh A."/>
            <person name="Mizoguchi H."/>
            <person name="Goto Y."/>
            <person name="Shimizu F."/>
            <person name="Wakebe H."/>
            <person name="Hishigaki H."/>
            <person name="Watanabe T."/>
            <person name="Sugiyama A."/>
            <person name="Takemoto M."/>
            <person name="Kawakami B."/>
            <person name="Yamazaki M."/>
            <person name="Watanabe K."/>
            <person name="Kumagai A."/>
            <person name="Itakura S."/>
            <person name="Fukuzumi Y."/>
            <person name="Fujimori Y."/>
            <person name="Komiyama M."/>
            <person name="Tashiro H."/>
            <person name="Tanigami A."/>
            <person name="Fujiwara T."/>
            <person name="Ono T."/>
            <person name="Yamada K."/>
            <person name="Fujii Y."/>
            <person name="Ozaki K."/>
            <person name="Hirao M."/>
            <person name="Ohmori Y."/>
            <person name="Kawabata A."/>
            <person name="Hikiji T."/>
            <person name="Kobatake N."/>
            <person name="Inagaki H."/>
            <person name="Ikema Y."/>
            <person name="Okamoto S."/>
            <person name="Okitani R."/>
            <person name="Kawakami T."/>
            <person name="Noguchi S."/>
            <person name="Itoh T."/>
            <person name="Shigeta K."/>
            <person name="Senba T."/>
            <person name="Matsumura K."/>
            <person name="Nakajima Y."/>
            <person name="Mizuno T."/>
            <person name="Morinaga M."/>
            <person name="Sasaki M."/>
            <person name="Togashi T."/>
            <person name="Oyama M."/>
            <person name="Hata H."/>
            <person name="Watanabe M."/>
            <person name="Komatsu T."/>
            <person name="Mizushima-Sugano J."/>
            <person name="Satoh T."/>
            <person name="Shirai Y."/>
            <person name="Takahashi Y."/>
            <person name="Nakagawa K."/>
            <person name="Okumura K."/>
            <person name="Nagase T."/>
            <person name="Nomura N."/>
            <person name="Kikuchi H."/>
            <person name="Masuho Y."/>
            <person name="Yamashita R."/>
            <person name="Nakai K."/>
            <person name="Yada T."/>
            <person name="Nakamura Y."/>
            <person name="Ohara O."/>
            <person name="Isogai T."/>
            <person name="Sugano S."/>
        </authorList>
    </citation>
    <scope>NUCLEOTIDE SEQUENCE [LARGE SCALE MRNA]</scope>
</reference>
<reference key="4">
    <citation type="journal article" date="2004" name="Nature">
        <title>The DNA sequence and comparative analysis of human chromosome 10.</title>
        <authorList>
            <person name="Deloukas P."/>
            <person name="Earthrowl M.E."/>
            <person name="Grafham D.V."/>
            <person name="Rubenfield M."/>
            <person name="French L."/>
            <person name="Steward C.A."/>
            <person name="Sims S.K."/>
            <person name="Jones M.C."/>
            <person name="Searle S."/>
            <person name="Scott C."/>
            <person name="Howe K."/>
            <person name="Hunt S.E."/>
            <person name="Andrews T.D."/>
            <person name="Gilbert J.G.R."/>
            <person name="Swarbreck D."/>
            <person name="Ashurst J.L."/>
            <person name="Taylor A."/>
            <person name="Battles J."/>
            <person name="Bird C.P."/>
            <person name="Ainscough R."/>
            <person name="Almeida J.P."/>
            <person name="Ashwell R.I.S."/>
            <person name="Ambrose K.D."/>
            <person name="Babbage A.K."/>
            <person name="Bagguley C.L."/>
            <person name="Bailey J."/>
            <person name="Banerjee R."/>
            <person name="Bates K."/>
            <person name="Beasley H."/>
            <person name="Bray-Allen S."/>
            <person name="Brown A.J."/>
            <person name="Brown J.Y."/>
            <person name="Burford D.C."/>
            <person name="Burrill W."/>
            <person name="Burton J."/>
            <person name="Cahill P."/>
            <person name="Camire D."/>
            <person name="Carter N.P."/>
            <person name="Chapman J.C."/>
            <person name="Clark S.Y."/>
            <person name="Clarke G."/>
            <person name="Clee C.M."/>
            <person name="Clegg S."/>
            <person name="Corby N."/>
            <person name="Coulson A."/>
            <person name="Dhami P."/>
            <person name="Dutta I."/>
            <person name="Dunn M."/>
            <person name="Faulkner L."/>
            <person name="Frankish A."/>
            <person name="Frankland J.A."/>
            <person name="Garner P."/>
            <person name="Garnett J."/>
            <person name="Gribble S."/>
            <person name="Griffiths C."/>
            <person name="Grocock R."/>
            <person name="Gustafson E."/>
            <person name="Hammond S."/>
            <person name="Harley J.L."/>
            <person name="Hart E."/>
            <person name="Heath P.D."/>
            <person name="Ho T.P."/>
            <person name="Hopkins B."/>
            <person name="Horne J."/>
            <person name="Howden P.J."/>
            <person name="Huckle E."/>
            <person name="Hynds C."/>
            <person name="Johnson C."/>
            <person name="Johnson D."/>
            <person name="Kana A."/>
            <person name="Kay M."/>
            <person name="Kimberley A.M."/>
            <person name="Kershaw J.K."/>
            <person name="Kokkinaki M."/>
            <person name="Laird G.K."/>
            <person name="Lawlor S."/>
            <person name="Lee H.M."/>
            <person name="Leongamornlert D.A."/>
            <person name="Laird G."/>
            <person name="Lloyd C."/>
            <person name="Lloyd D.M."/>
            <person name="Loveland J."/>
            <person name="Lovell J."/>
            <person name="McLaren S."/>
            <person name="McLay K.E."/>
            <person name="McMurray A."/>
            <person name="Mashreghi-Mohammadi M."/>
            <person name="Matthews L."/>
            <person name="Milne S."/>
            <person name="Nickerson T."/>
            <person name="Nguyen M."/>
            <person name="Overton-Larty E."/>
            <person name="Palmer S.A."/>
            <person name="Pearce A.V."/>
            <person name="Peck A.I."/>
            <person name="Pelan S."/>
            <person name="Phillimore B."/>
            <person name="Porter K."/>
            <person name="Rice C.M."/>
            <person name="Rogosin A."/>
            <person name="Ross M.T."/>
            <person name="Sarafidou T."/>
            <person name="Sehra H.K."/>
            <person name="Shownkeen R."/>
            <person name="Skuce C.D."/>
            <person name="Smith M."/>
            <person name="Standring L."/>
            <person name="Sycamore N."/>
            <person name="Tester J."/>
            <person name="Thorpe A."/>
            <person name="Torcasso W."/>
            <person name="Tracey A."/>
            <person name="Tromans A."/>
            <person name="Tsolas J."/>
            <person name="Wall M."/>
            <person name="Walsh J."/>
            <person name="Wang H."/>
            <person name="Weinstock K."/>
            <person name="West A.P."/>
            <person name="Willey D.L."/>
            <person name="Whitehead S.L."/>
            <person name="Wilming L."/>
            <person name="Wray P.W."/>
            <person name="Young L."/>
            <person name="Chen Y."/>
            <person name="Lovering R.C."/>
            <person name="Moschonas N.K."/>
            <person name="Siebert R."/>
            <person name="Fechtel K."/>
            <person name="Bentley D."/>
            <person name="Durbin R.M."/>
            <person name="Hubbard T."/>
            <person name="Doucette-Stamm L."/>
            <person name="Beck S."/>
            <person name="Smith D.R."/>
            <person name="Rogers J."/>
        </authorList>
    </citation>
    <scope>NUCLEOTIDE SEQUENCE [LARGE SCALE GENOMIC DNA]</scope>
</reference>
<reference key="5">
    <citation type="journal article" date="2004" name="Genome Res.">
        <title>The status, quality, and expansion of the NIH full-length cDNA project: the Mammalian Gene Collection (MGC).</title>
        <authorList>
            <consortium name="The MGC Project Team"/>
        </authorList>
    </citation>
    <scope>NUCLEOTIDE SEQUENCE [LARGE SCALE MRNA]</scope>
    <source>
        <tissue>Uterus</tissue>
    </source>
</reference>
<reference key="6">
    <citation type="journal article" date="2005" name="Dev. Cell">
        <title>Formation of MacroH2A-containing senescence-associated heterochromatin foci and senescence driven by ASF1a and HIRA.</title>
        <authorList>
            <person name="Zhang R."/>
            <person name="Poustovoitov M.V."/>
            <person name="Ye X."/>
            <person name="Santos H.A."/>
            <person name="Chen W."/>
            <person name="Daganzo S.M."/>
            <person name="Erzberger J.P."/>
            <person name="Serebriiskii I.G."/>
            <person name="Canutescu A.A."/>
            <person name="Dunbrack R.L."/>
            <person name="Pehrson J.R."/>
            <person name="Berger J.M."/>
            <person name="Kaufman P.D."/>
            <person name="Adams P.D."/>
        </authorList>
    </citation>
    <scope>FUNCTION</scope>
    <scope>SUBCELLULAR LOCATION</scope>
</reference>
<reference key="7">
    <citation type="journal article" date="2009" name="Anal. Chem.">
        <title>Lys-N and trypsin cover complementary parts of the phosphoproteome in a refined SCX-based approach.</title>
        <authorList>
            <person name="Gauci S."/>
            <person name="Helbig A.O."/>
            <person name="Slijper M."/>
            <person name="Krijgsveld J."/>
            <person name="Heck A.J."/>
            <person name="Mohammed S."/>
        </authorList>
    </citation>
    <scope>IDENTIFICATION BY MASS SPECTROMETRY [LARGE SCALE ANALYSIS]</scope>
</reference>
<reference key="8">
    <citation type="journal article" date="2015" name="Mol. Cell. Proteomics">
        <title>System-wide analysis of SUMOylation dynamics in response to replication stress reveals novel small ubiquitin-like modified target proteins and acceptor lysines relevant for genome stability.</title>
        <authorList>
            <person name="Xiao Z."/>
            <person name="Chang J.G."/>
            <person name="Hendriks I.A."/>
            <person name="Sigurdsson J.O."/>
            <person name="Olsen J.V."/>
            <person name="Vertegaal A.C."/>
        </authorList>
    </citation>
    <scope>SUMOYLATION [LARGE SCALE ANALYSIS] AT LYS-239</scope>
    <scope>IDENTIFICATION BY MASS SPECTROMETRY [LARGE SCALE ANALYSIS]</scope>
</reference>
<reference key="9">
    <citation type="journal article" date="2017" name="Nat. Struct. Mol. Biol.">
        <title>Site-specific mapping of the human SUMO proteome reveals co-modification with phosphorylation.</title>
        <authorList>
            <person name="Hendriks I.A."/>
            <person name="Lyon D."/>
            <person name="Young C."/>
            <person name="Jensen L.J."/>
            <person name="Vertegaal A.C."/>
            <person name="Nielsen M.L."/>
        </authorList>
    </citation>
    <scope>SUMOYLATION [LARGE SCALE ANALYSIS] AT LYS-239</scope>
    <scope>IDENTIFICATION BY MASS SPECTROMETRY [LARGE SCALE ANALYSIS]</scope>
</reference>
<comment type="function">
    <text evidence="6">Variant histone H2A which replaces conventional H2A in a subset of nucleosomes where it represses transcription. Nucleosomes wrap and compact DNA into chromatin, limiting DNA accessibility to the cellular machineries which require DNA as a template. Histones thereby play a central role in transcription regulation, DNA repair, DNA replication and chromosomal stability. DNA accessibility is regulated via a complex set of post-translational modifications of histones, also called histone code, and nucleosome remodeling. May be involved in stable X chromosome inactivation.</text>
</comment>
<comment type="subunit">
    <text>The nucleosome is a histone octamer containing two molecules each of H2A, H2B, H3 and H4 assembled in one H3-H4 heterotetramer and two H2A-H2B heterodimers.</text>
</comment>
<comment type="interaction">
    <interactant intactId="EBI-3922608">
        <id>Q9P0M6</id>
    </interactant>
    <interactant intactId="EBI-10268158">
        <id>Q8N9E0</id>
        <label>FAM133A</label>
    </interactant>
    <organismsDiffer>false</organismsDiffer>
    <experiments>3</experiments>
</comment>
<comment type="interaction">
    <interactant intactId="EBI-3922608">
        <id>Q9P0M6</id>
    </interactant>
    <interactant intactId="EBI-12142839">
        <id>U3KQK0</id>
        <label>H2BC15</label>
    </interactant>
    <organismsDiffer>false</organismsDiffer>
    <experiments>3</experiments>
</comment>
<comment type="interaction">
    <interactant intactId="EBI-3922608">
        <id>Q9P0M6</id>
    </interactant>
    <interactant intactId="EBI-25487941">
        <id>PRO_0000037315</id>
        <label>rep</label>
        <dbReference type="UniProtKB" id="P0C6X7"/>
    </interactant>
    <organismsDiffer>true</organismsDiffer>
    <experiments>2</experiments>
</comment>
<comment type="subcellular location">
    <subcellularLocation>
        <location evidence="4 5 6">Nucleus</location>
    </subcellularLocation>
    <subcellularLocation>
        <location evidence="4 5 6">Chromosome</location>
    </subcellularLocation>
    <text evidence="4 5 6">Enriched in inactive X chromosome chromatin (PubMed:11331621, PubMed:11262398) and in senescence-associated heterochromatin (PubMed:15621527).</text>
</comment>
<comment type="similarity">
    <text evidence="7">Belongs to the histone H2A family.</text>
</comment>
<feature type="chain" id="PRO_0000055320" description="Core histone macro-H2A.2">
    <location>
        <begin position="1"/>
        <end position="372"/>
    </location>
</feature>
<feature type="domain" description="Histone H2A">
    <location>
        <begin position="2"/>
        <end position="117"/>
    </location>
</feature>
<feature type="domain" description="Macro" evidence="2">
    <location>
        <begin position="184"/>
        <end position="370"/>
    </location>
</feature>
<feature type="region of interest" description="Disordered" evidence="3">
    <location>
        <begin position="115"/>
        <end position="182"/>
    </location>
</feature>
<feature type="compositionally biased region" description="Basic residues" evidence="3">
    <location>
        <begin position="135"/>
        <end position="161"/>
    </location>
</feature>
<feature type="modified residue" description="N6-lactoyllysine; alternate" evidence="1">
    <location>
        <position position="7"/>
    </location>
</feature>
<feature type="modified residue" description="N6-lactoyllysine; alternate" evidence="1">
    <location>
        <position position="9"/>
    </location>
</feature>
<feature type="cross-link" description="Glycyl lysine isopeptide (Lys-Gly) (interchain with G-Cter in SUMO2)" evidence="9 10">
    <location>
        <position position="239"/>
    </location>
</feature>
<feature type="strand" evidence="11">
    <location>
        <begin position="183"/>
        <end position="191"/>
    </location>
</feature>
<feature type="strand" evidence="11">
    <location>
        <begin position="196"/>
        <end position="202"/>
    </location>
</feature>
<feature type="helix" evidence="11">
    <location>
        <begin position="204"/>
        <end position="209"/>
    </location>
</feature>
<feature type="strand" evidence="11">
    <location>
        <begin position="213"/>
        <end position="219"/>
    </location>
</feature>
<feature type="helix" evidence="11">
    <location>
        <begin position="227"/>
        <end position="252"/>
    </location>
</feature>
<feature type="strand" evidence="11">
    <location>
        <begin position="260"/>
        <end position="264"/>
    </location>
</feature>
<feature type="strand" evidence="11">
    <location>
        <begin position="266"/>
        <end position="277"/>
    </location>
</feature>
<feature type="helix" evidence="11">
    <location>
        <begin position="286"/>
        <end position="302"/>
    </location>
</feature>
<feature type="turn" evidence="11">
    <location>
        <begin position="303"/>
        <end position="305"/>
    </location>
</feature>
<feature type="strand" evidence="11">
    <location>
        <begin position="307"/>
        <end position="311"/>
    </location>
</feature>
<feature type="helix" evidence="11">
    <location>
        <begin position="323"/>
        <end position="339"/>
    </location>
</feature>
<feature type="strand" evidence="11">
    <location>
        <begin position="348"/>
        <end position="353"/>
    </location>
</feature>
<feature type="helix" evidence="11">
    <location>
        <begin position="356"/>
        <end position="366"/>
    </location>
</feature>
<feature type="strand" evidence="11">
    <location>
        <begin position="369"/>
        <end position="371"/>
    </location>
</feature>
<evidence type="ECO:0000250" key="1">
    <source>
        <dbReference type="UniProtKB" id="P0C0S5"/>
    </source>
</evidence>
<evidence type="ECO:0000255" key="2">
    <source>
        <dbReference type="PROSITE-ProRule" id="PRU00490"/>
    </source>
</evidence>
<evidence type="ECO:0000256" key="3">
    <source>
        <dbReference type="SAM" id="MobiDB-lite"/>
    </source>
</evidence>
<evidence type="ECO:0000269" key="4">
    <source>
    </source>
</evidence>
<evidence type="ECO:0000269" key="5">
    <source>
    </source>
</evidence>
<evidence type="ECO:0000269" key="6">
    <source>
    </source>
</evidence>
<evidence type="ECO:0000305" key="7"/>
<evidence type="ECO:0000312" key="8">
    <source>
        <dbReference type="HGNC" id="HGNC:14453"/>
    </source>
</evidence>
<evidence type="ECO:0007744" key="9">
    <source>
    </source>
</evidence>
<evidence type="ECO:0007744" key="10">
    <source>
    </source>
</evidence>
<evidence type="ECO:0007829" key="11">
    <source>
        <dbReference type="PDB" id="6FY5"/>
    </source>
</evidence>
<name>H2AW_HUMAN</name>
<organism>
    <name type="scientific">Homo sapiens</name>
    <name type="common">Human</name>
    <dbReference type="NCBI Taxonomy" id="9606"/>
    <lineage>
        <taxon>Eukaryota</taxon>
        <taxon>Metazoa</taxon>
        <taxon>Chordata</taxon>
        <taxon>Craniata</taxon>
        <taxon>Vertebrata</taxon>
        <taxon>Euteleostomi</taxon>
        <taxon>Mammalia</taxon>
        <taxon>Eutheria</taxon>
        <taxon>Euarchontoglires</taxon>
        <taxon>Primates</taxon>
        <taxon>Haplorrhini</taxon>
        <taxon>Catarrhini</taxon>
        <taxon>Hominidae</taxon>
        <taxon>Homo</taxon>
    </lineage>
</organism>
<sequence length="372" mass="40058">MSGRSGKKKMSKLSRSARAGVIFPVGRLMRYLKKGTFKYRISVGAPVYMAAVIEYLAAEILELAGNAARDNKKARIAPRHILLAVANDEELNQLLKGVTIASGGVLPRIHPELLAKKRGTKGKSETILSPPPEKRGRKATSGKKGGKKSKAAKPRTSKKSKPKDSDKEGTSNSTSEDGPGDGFTILSSKSLVLGQKLSLTQSDISHIGSMRVEGIVHPTTAEIDLKEDIGKALEKAGGKEFLETVKELRKSQGPLEVAEAAVSQSSGLAAKFVIHCHIPQWGSDKCEEQLEETIKNCLSAAEDKKLKSVAFPPFPSGRNCFPKQTAAQVTLKAISAHFDDSSASSLKNVYFLLFDSESIGIYVQEMAKLDAK</sequence>
<proteinExistence type="evidence at protein level"/>